<keyword id="KW-1185">Reference proteome</keyword>
<protein>
    <recommendedName>
        <fullName evidence="1">UPF0229 protein Ccel_0490</fullName>
    </recommendedName>
</protein>
<reference key="1">
    <citation type="submission" date="2009-01" db="EMBL/GenBank/DDBJ databases">
        <title>Complete sequence of Clostridium cellulolyticum H10.</title>
        <authorList>
            <consortium name="US DOE Joint Genome Institute"/>
            <person name="Lucas S."/>
            <person name="Copeland A."/>
            <person name="Lapidus A."/>
            <person name="Glavina del Rio T."/>
            <person name="Dalin E."/>
            <person name="Tice H."/>
            <person name="Bruce D."/>
            <person name="Goodwin L."/>
            <person name="Pitluck S."/>
            <person name="Chertkov O."/>
            <person name="Saunders E."/>
            <person name="Brettin T."/>
            <person name="Detter J.C."/>
            <person name="Han C."/>
            <person name="Larimer F."/>
            <person name="Land M."/>
            <person name="Hauser L."/>
            <person name="Kyrpides N."/>
            <person name="Ivanova N."/>
            <person name="Zhou J."/>
            <person name="Richardson P."/>
        </authorList>
    </citation>
    <scope>NUCLEOTIDE SEQUENCE [LARGE SCALE GENOMIC DNA]</scope>
    <source>
        <strain>ATCC 35319 / DSM 5812 / JCM 6584 / H10</strain>
    </source>
</reference>
<name>Y490_RUMCH</name>
<proteinExistence type="inferred from homology"/>
<comment type="similarity">
    <text evidence="1">Belongs to the UPF0229 family.</text>
</comment>
<gene>
    <name type="ordered locus">Ccel_0490</name>
</gene>
<dbReference type="EMBL" id="CP001348">
    <property type="protein sequence ID" value="ACL74872.1"/>
    <property type="molecule type" value="Genomic_DNA"/>
</dbReference>
<dbReference type="RefSeq" id="WP_012634934.1">
    <property type="nucleotide sequence ID" value="NC_011898.1"/>
</dbReference>
<dbReference type="SMR" id="B8I6I0"/>
<dbReference type="STRING" id="394503.Ccel_0490"/>
<dbReference type="KEGG" id="cce:Ccel_0490"/>
<dbReference type="eggNOG" id="COG2718">
    <property type="taxonomic scope" value="Bacteria"/>
</dbReference>
<dbReference type="HOGENOM" id="CLU_049702_2_0_9"/>
<dbReference type="OrthoDB" id="9788289at2"/>
<dbReference type="Proteomes" id="UP000001349">
    <property type="component" value="Chromosome"/>
</dbReference>
<dbReference type="Gene3D" id="3.40.50.410">
    <property type="entry name" value="von Willebrand factor, type A domain"/>
    <property type="match status" value="1"/>
</dbReference>
<dbReference type="HAMAP" id="MF_01232">
    <property type="entry name" value="UPF0229"/>
    <property type="match status" value="1"/>
</dbReference>
<dbReference type="InterPro" id="IPR014230">
    <property type="entry name" value="Spore_YhbH"/>
</dbReference>
<dbReference type="InterPro" id="IPR006698">
    <property type="entry name" value="UPF0229"/>
</dbReference>
<dbReference type="InterPro" id="IPR036465">
    <property type="entry name" value="vWFA_dom_sf"/>
</dbReference>
<dbReference type="NCBIfam" id="TIGR02877">
    <property type="entry name" value="spore_yhbH"/>
    <property type="match status" value="1"/>
</dbReference>
<dbReference type="PANTHER" id="PTHR30510">
    <property type="entry name" value="UPF0229 PROTEIN YEAH"/>
    <property type="match status" value="1"/>
</dbReference>
<dbReference type="PANTHER" id="PTHR30510:SF2">
    <property type="entry name" value="UPF0229 PROTEIN YEAH"/>
    <property type="match status" value="1"/>
</dbReference>
<dbReference type="Pfam" id="PF04285">
    <property type="entry name" value="DUF444"/>
    <property type="match status" value="2"/>
</dbReference>
<dbReference type="SUPFAM" id="SSF53300">
    <property type="entry name" value="vWA-like"/>
    <property type="match status" value="1"/>
</dbReference>
<sequence length="398" mass="45603">MAIFRDCSNIGKDRSAEDRRRHRELVEDSIKKNLGSIIAEESIIGKSKDKKIKIPIKGIKEFQFIYGKSKPGVGAGDGNEKRGDKFPGDSQEGKGKGNAGNSEGEEVYETEITIEEVIKYLFDDMNLPDIAKKQLSQLEEKSYRKLGYQHKGIPPRLAKKRSVIEKIKRKQASKRSEDGEDITHDKEYGKERFPFIEEDLRYYRIKEDNKRDYNAVVLCIMDVSGSMDQTKKYLARSFYFLLYQFLRLKYANVDVVFIAHTTTAKEVNEREFFHRGESGGTYISSGYEKALEIISERYSPTNWNIYAFHCSDGDNWSEDNRKAVESANKLCEVCNLFGYGEIVPGYYNIGSTIKNEFLNKIKSKNFAAININKKEDVLPALKKLLDKASDKDEKTGLK</sequence>
<evidence type="ECO:0000255" key="1">
    <source>
        <dbReference type="HAMAP-Rule" id="MF_01232"/>
    </source>
</evidence>
<evidence type="ECO:0000256" key="2">
    <source>
        <dbReference type="SAM" id="MobiDB-lite"/>
    </source>
</evidence>
<organism>
    <name type="scientific">Ruminiclostridium cellulolyticum (strain ATCC 35319 / DSM 5812 / JCM 6584 / H10)</name>
    <name type="common">Clostridium cellulolyticum</name>
    <dbReference type="NCBI Taxonomy" id="394503"/>
    <lineage>
        <taxon>Bacteria</taxon>
        <taxon>Bacillati</taxon>
        <taxon>Bacillota</taxon>
        <taxon>Clostridia</taxon>
        <taxon>Eubacteriales</taxon>
        <taxon>Oscillospiraceae</taxon>
        <taxon>Ruminiclostridium</taxon>
    </lineage>
</organism>
<accession>B8I6I0</accession>
<feature type="chain" id="PRO_1000164977" description="UPF0229 protein Ccel_0490">
    <location>
        <begin position="1"/>
        <end position="398"/>
    </location>
</feature>
<feature type="region of interest" description="Disordered" evidence="2">
    <location>
        <begin position="1"/>
        <end position="22"/>
    </location>
</feature>
<feature type="region of interest" description="Disordered" evidence="2">
    <location>
        <begin position="68"/>
        <end position="104"/>
    </location>
</feature>
<feature type="compositionally biased region" description="Basic and acidic residues" evidence="2">
    <location>
        <begin position="11"/>
        <end position="22"/>
    </location>
</feature>
<feature type="compositionally biased region" description="Basic and acidic residues" evidence="2">
    <location>
        <begin position="78"/>
        <end position="95"/>
    </location>
</feature>